<evidence type="ECO:0000255" key="1">
    <source>
        <dbReference type="HAMAP-Rule" id="MF_00049"/>
    </source>
</evidence>
<feature type="chain" id="PRO_0000334789" description="Leucine--tRNA ligase">
    <location>
        <begin position="1"/>
        <end position="827"/>
    </location>
</feature>
<feature type="short sequence motif" description="'HIGH' region">
    <location>
        <begin position="42"/>
        <end position="52"/>
    </location>
</feature>
<feature type="short sequence motif" description="'KMSKS' region">
    <location>
        <begin position="583"/>
        <end position="587"/>
    </location>
</feature>
<feature type="binding site" evidence="1">
    <location>
        <position position="586"/>
    </location>
    <ligand>
        <name>ATP</name>
        <dbReference type="ChEBI" id="CHEBI:30616"/>
    </ligand>
</feature>
<keyword id="KW-0030">Aminoacyl-tRNA synthetase</keyword>
<keyword id="KW-0067">ATP-binding</keyword>
<keyword id="KW-0963">Cytoplasm</keyword>
<keyword id="KW-0436">Ligase</keyword>
<keyword id="KW-0547">Nucleotide-binding</keyword>
<keyword id="KW-0648">Protein biosynthesis</keyword>
<keyword id="KW-1185">Reference proteome</keyword>
<dbReference type="EC" id="6.1.1.4" evidence="1"/>
<dbReference type="EMBL" id="AP009389">
    <property type="protein sequence ID" value="BAF59020.1"/>
    <property type="molecule type" value="Genomic_DNA"/>
</dbReference>
<dbReference type="SMR" id="A5D416"/>
<dbReference type="STRING" id="370438.PTH_0839"/>
<dbReference type="KEGG" id="pth:PTH_0839"/>
<dbReference type="eggNOG" id="COG0495">
    <property type="taxonomic scope" value="Bacteria"/>
</dbReference>
<dbReference type="HOGENOM" id="CLU_004427_0_0_9"/>
<dbReference type="Proteomes" id="UP000006556">
    <property type="component" value="Chromosome"/>
</dbReference>
<dbReference type="GO" id="GO:0005829">
    <property type="term" value="C:cytosol"/>
    <property type="evidence" value="ECO:0007669"/>
    <property type="project" value="TreeGrafter"/>
</dbReference>
<dbReference type="GO" id="GO:0002161">
    <property type="term" value="F:aminoacyl-tRNA deacylase activity"/>
    <property type="evidence" value="ECO:0007669"/>
    <property type="project" value="InterPro"/>
</dbReference>
<dbReference type="GO" id="GO:0005524">
    <property type="term" value="F:ATP binding"/>
    <property type="evidence" value="ECO:0007669"/>
    <property type="project" value="UniProtKB-UniRule"/>
</dbReference>
<dbReference type="GO" id="GO:0004823">
    <property type="term" value="F:leucine-tRNA ligase activity"/>
    <property type="evidence" value="ECO:0007669"/>
    <property type="project" value="UniProtKB-UniRule"/>
</dbReference>
<dbReference type="GO" id="GO:0006429">
    <property type="term" value="P:leucyl-tRNA aminoacylation"/>
    <property type="evidence" value="ECO:0007669"/>
    <property type="project" value="UniProtKB-UniRule"/>
</dbReference>
<dbReference type="CDD" id="cd07958">
    <property type="entry name" value="Anticodon_Ia_Leu_BEm"/>
    <property type="match status" value="1"/>
</dbReference>
<dbReference type="CDD" id="cd00812">
    <property type="entry name" value="LeuRS_core"/>
    <property type="match status" value="1"/>
</dbReference>
<dbReference type="FunFam" id="3.40.50.620:FF:000003">
    <property type="entry name" value="Leucine--tRNA ligase"/>
    <property type="match status" value="1"/>
</dbReference>
<dbReference type="FunFam" id="3.40.50.620:FF:000056">
    <property type="entry name" value="Leucine--tRNA ligase"/>
    <property type="match status" value="1"/>
</dbReference>
<dbReference type="FunFam" id="1.10.730.10:FF:000011">
    <property type="entry name" value="Leucine--tRNA ligase chloroplastic/mitochondrial"/>
    <property type="match status" value="1"/>
</dbReference>
<dbReference type="Gene3D" id="3.10.20.590">
    <property type="match status" value="1"/>
</dbReference>
<dbReference type="Gene3D" id="3.40.50.620">
    <property type="entry name" value="HUPs"/>
    <property type="match status" value="2"/>
</dbReference>
<dbReference type="Gene3D" id="1.10.730.10">
    <property type="entry name" value="Isoleucyl-tRNA Synthetase, Domain 1"/>
    <property type="match status" value="1"/>
</dbReference>
<dbReference type="HAMAP" id="MF_00049_B">
    <property type="entry name" value="Leu_tRNA_synth_B"/>
    <property type="match status" value="1"/>
</dbReference>
<dbReference type="InterPro" id="IPR001412">
    <property type="entry name" value="aa-tRNA-synth_I_CS"/>
</dbReference>
<dbReference type="InterPro" id="IPR002300">
    <property type="entry name" value="aa-tRNA-synth_Ia"/>
</dbReference>
<dbReference type="InterPro" id="IPR002302">
    <property type="entry name" value="Leu-tRNA-ligase"/>
</dbReference>
<dbReference type="InterPro" id="IPR025709">
    <property type="entry name" value="Leu_tRNA-synth_edit"/>
</dbReference>
<dbReference type="InterPro" id="IPR013155">
    <property type="entry name" value="M/V/L/I-tRNA-synth_anticd-bd"/>
</dbReference>
<dbReference type="InterPro" id="IPR015413">
    <property type="entry name" value="Methionyl/Leucyl_tRNA_Synth"/>
</dbReference>
<dbReference type="InterPro" id="IPR014729">
    <property type="entry name" value="Rossmann-like_a/b/a_fold"/>
</dbReference>
<dbReference type="InterPro" id="IPR009080">
    <property type="entry name" value="tRNAsynth_Ia_anticodon-bd"/>
</dbReference>
<dbReference type="InterPro" id="IPR009008">
    <property type="entry name" value="Val/Leu/Ile-tRNA-synth_edit"/>
</dbReference>
<dbReference type="NCBIfam" id="TIGR00396">
    <property type="entry name" value="leuS_bact"/>
    <property type="match status" value="1"/>
</dbReference>
<dbReference type="PANTHER" id="PTHR43740:SF2">
    <property type="entry name" value="LEUCINE--TRNA LIGASE, MITOCHONDRIAL"/>
    <property type="match status" value="1"/>
</dbReference>
<dbReference type="PANTHER" id="PTHR43740">
    <property type="entry name" value="LEUCYL-TRNA SYNTHETASE"/>
    <property type="match status" value="1"/>
</dbReference>
<dbReference type="Pfam" id="PF08264">
    <property type="entry name" value="Anticodon_1"/>
    <property type="match status" value="1"/>
</dbReference>
<dbReference type="Pfam" id="PF00133">
    <property type="entry name" value="tRNA-synt_1"/>
    <property type="match status" value="1"/>
</dbReference>
<dbReference type="Pfam" id="PF13603">
    <property type="entry name" value="tRNA-synt_1_2"/>
    <property type="match status" value="1"/>
</dbReference>
<dbReference type="Pfam" id="PF09334">
    <property type="entry name" value="tRNA-synt_1g"/>
    <property type="match status" value="1"/>
</dbReference>
<dbReference type="PRINTS" id="PR00985">
    <property type="entry name" value="TRNASYNTHLEU"/>
</dbReference>
<dbReference type="SUPFAM" id="SSF47323">
    <property type="entry name" value="Anticodon-binding domain of a subclass of class I aminoacyl-tRNA synthetases"/>
    <property type="match status" value="1"/>
</dbReference>
<dbReference type="SUPFAM" id="SSF52374">
    <property type="entry name" value="Nucleotidylyl transferase"/>
    <property type="match status" value="1"/>
</dbReference>
<dbReference type="SUPFAM" id="SSF50677">
    <property type="entry name" value="ValRS/IleRS/LeuRS editing domain"/>
    <property type="match status" value="1"/>
</dbReference>
<dbReference type="PROSITE" id="PS00178">
    <property type="entry name" value="AA_TRNA_LIGASE_I"/>
    <property type="match status" value="1"/>
</dbReference>
<reference key="1">
    <citation type="journal article" date="2008" name="Genome Res.">
        <title>The genome of Pelotomaculum thermopropionicum reveals niche-associated evolution in anaerobic microbiota.</title>
        <authorList>
            <person name="Kosaka T."/>
            <person name="Kato S."/>
            <person name="Shimoyama T."/>
            <person name="Ishii S."/>
            <person name="Abe T."/>
            <person name="Watanabe K."/>
        </authorList>
    </citation>
    <scope>NUCLEOTIDE SEQUENCE [LARGE SCALE GENOMIC DNA]</scope>
    <source>
        <strain>DSM 13744 / JCM 10971 / SI</strain>
    </source>
</reference>
<name>SYL_PELTS</name>
<comment type="catalytic activity">
    <reaction evidence="1">
        <text>tRNA(Leu) + L-leucine + ATP = L-leucyl-tRNA(Leu) + AMP + diphosphate</text>
        <dbReference type="Rhea" id="RHEA:11688"/>
        <dbReference type="Rhea" id="RHEA-COMP:9613"/>
        <dbReference type="Rhea" id="RHEA-COMP:9622"/>
        <dbReference type="ChEBI" id="CHEBI:30616"/>
        <dbReference type="ChEBI" id="CHEBI:33019"/>
        <dbReference type="ChEBI" id="CHEBI:57427"/>
        <dbReference type="ChEBI" id="CHEBI:78442"/>
        <dbReference type="ChEBI" id="CHEBI:78494"/>
        <dbReference type="ChEBI" id="CHEBI:456215"/>
        <dbReference type="EC" id="6.1.1.4"/>
    </reaction>
</comment>
<comment type="subcellular location">
    <subcellularLocation>
        <location evidence="1">Cytoplasm</location>
    </subcellularLocation>
</comment>
<comment type="similarity">
    <text evidence="1">Belongs to the class-I aminoacyl-tRNA synthetase family.</text>
</comment>
<sequence>MKERYDFKEIEEKWQARWAAQDLYAVPDYSDRPKYYCLEMFPYPSGKLHMGHVRNYSIGDVVARFKTMQGYHVLHPMGWDAFGLPAENAAIKHGGVHPAEWTLDNIESMRAQLKQLGISYDWNREVATCHPGYYRWTQWLFLQLFHNGLAYKKKAAVNWCPGCATVLANEQVKDGGCERCKAPVEKRELEQWFFKITDYAERLLKDLELLEGWPEKVKIMQENWIGRSEGAEIDFKVEGSDDIITVYTTRPDTVFGVTYMVLAPEHPLVEKLIAGSKQEAEIKEFIRKVRNLREIDRTSTEAEKVGMPTGAHCINPLTGEKVPVLIANYVLMEYGTGCVMGVPAHDQRDFEFARKYGYPIRVVIQPPGVELDPAAMEAAYEEEGFLVNSGPFSGMPNKEAIRAITRHLEEKGRGRFRVTYRLRDWLISRQRYWGAPIPIIYCDRCGTVPVPESDLPVLLPMDVEFKPTGQSPLAECPEFVNAACPSCGGPGKRETDTMDTFMCSSWYYYRYTSPRDNDAPWDRNKVDYWLPVDQYIGGVEHAILHLLYSRFFTKVLYDLKLVSNLEPFSNLLTQGMVLKDGAKMSKSRGNVVSPEDIVARYGADTARLFILFAAPPERDLEWSDQGVEGCYRFLNRVWRLVMPLAGLLKEAPAAVSGKLVGANREMRRVTHSTIKKVTEDISARFNFNTAVSAIMELVNALYQFREIPESDRNPAVLREAVESLLLLLAPFAPHITEELWEATGHRGSIHLQPWPSYDPEAIAEDEITIVVQINGRVRERLLVPAGITPQEMQDRVMKEPRVMRMVEGKKVAKVITVPGKLVNIVIK</sequence>
<organism>
    <name type="scientific">Pelotomaculum thermopropionicum (strain DSM 13744 / JCM 10971 / SI)</name>
    <dbReference type="NCBI Taxonomy" id="370438"/>
    <lineage>
        <taxon>Bacteria</taxon>
        <taxon>Bacillati</taxon>
        <taxon>Bacillota</taxon>
        <taxon>Clostridia</taxon>
        <taxon>Eubacteriales</taxon>
        <taxon>Desulfotomaculaceae</taxon>
        <taxon>Pelotomaculum</taxon>
    </lineage>
</organism>
<proteinExistence type="inferred from homology"/>
<accession>A5D416</accession>
<protein>
    <recommendedName>
        <fullName evidence="1">Leucine--tRNA ligase</fullName>
        <ecNumber evidence="1">6.1.1.4</ecNumber>
    </recommendedName>
    <alternativeName>
        <fullName evidence="1">Leucyl-tRNA synthetase</fullName>
        <shortName evidence="1">LeuRS</shortName>
    </alternativeName>
</protein>
<gene>
    <name evidence="1" type="primary">leuS</name>
    <name type="ordered locus">PTH_0839</name>
</gene>